<organism>
    <name type="scientific">Leptothrix cholodnii (strain ATCC 51168 / LMG 8142 / SP-6)</name>
    <name type="common">Leptothrix discophora (strain SP-6)</name>
    <dbReference type="NCBI Taxonomy" id="395495"/>
    <lineage>
        <taxon>Bacteria</taxon>
        <taxon>Pseudomonadati</taxon>
        <taxon>Pseudomonadota</taxon>
        <taxon>Betaproteobacteria</taxon>
        <taxon>Burkholderiales</taxon>
        <taxon>Sphaerotilaceae</taxon>
        <taxon>Leptothrix</taxon>
    </lineage>
</organism>
<evidence type="ECO:0000255" key="1">
    <source>
        <dbReference type="HAMAP-Rule" id="MF_00248"/>
    </source>
</evidence>
<proteinExistence type="inferred from homology"/>
<sequence length="178" mass="19434">MESFHGTTILSVRRGEQVAMGGDGQVTLGHIVVKASARKVRRLYREQVLAGFAGATADAFTLFERFESKLEKHQGHLVRAAVELTRDWRTDRVLRRLEAMLAVADRSASLIITGNGDVLEPEYGIVAIGSGGAYAQAAARAMLQHTEQSPADIVKRSLEIAGDLCIYTNQSHTIETLE</sequence>
<accession>B1Y6R3</accession>
<reference key="1">
    <citation type="submission" date="2008-03" db="EMBL/GenBank/DDBJ databases">
        <title>Complete sequence of Leptothrix cholodnii SP-6.</title>
        <authorList>
            <consortium name="US DOE Joint Genome Institute"/>
            <person name="Copeland A."/>
            <person name="Lucas S."/>
            <person name="Lapidus A."/>
            <person name="Glavina del Rio T."/>
            <person name="Dalin E."/>
            <person name="Tice H."/>
            <person name="Bruce D."/>
            <person name="Goodwin L."/>
            <person name="Pitluck S."/>
            <person name="Chertkov O."/>
            <person name="Brettin T."/>
            <person name="Detter J.C."/>
            <person name="Han C."/>
            <person name="Kuske C.R."/>
            <person name="Schmutz J."/>
            <person name="Larimer F."/>
            <person name="Land M."/>
            <person name="Hauser L."/>
            <person name="Kyrpides N."/>
            <person name="Lykidis A."/>
            <person name="Emerson D."/>
            <person name="Richardson P."/>
        </authorList>
    </citation>
    <scope>NUCLEOTIDE SEQUENCE [LARGE SCALE GENOMIC DNA]</scope>
    <source>
        <strain>ATCC 51168 / LMG 8142 / SP-6</strain>
    </source>
</reference>
<gene>
    <name evidence="1" type="primary">hslV</name>
    <name type="ordered locus">Lcho_3837</name>
</gene>
<keyword id="KW-0021">Allosteric enzyme</keyword>
<keyword id="KW-0963">Cytoplasm</keyword>
<keyword id="KW-0378">Hydrolase</keyword>
<keyword id="KW-0479">Metal-binding</keyword>
<keyword id="KW-0645">Protease</keyword>
<keyword id="KW-1185">Reference proteome</keyword>
<keyword id="KW-0915">Sodium</keyword>
<keyword id="KW-0888">Threonine protease</keyword>
<name>HSLV_LEPCP</name>
<protein>
    <recommendedName>
        <fullName evidence="1">ATP-dependent protease subunit HslV</fullName>
        <ecNumber evidence="1">3.4.25.2</ecNumber>
    </recommendedName>
</protein>
<feature type="chain" id="PRO_1000100899" description="ATP-dependent protease subunit HslV">
    <location>
        <begin position="1"/>
        <end position="178"/>
    </location>
</feature>
<feature type="active site" evidence="1">
    <location>
        <position position="7"/>
    </location>
</feature>
<feature type="binding site" evidence="1">
    <location>
        <position position="162"/>
    </location>
    <ligand>
        <name>Na(+)</name>
        <dbReference type="ChEBI" id="CHEBI:29101"/>
    </ligand>
</feature>
<feature type="binding site" evidence="1">
    <location>
        <position position="165"/>
    </location>
    <ligand>
        <name>Na(+)</name>
        <dbReference type="ChEBI" id="CHEBI:29101"/>
    </ligand>
</feature>
<feature type="binding site" evidence="1">
    <location>
        <position position="168"/>
    </location>
    <ligand>
        <name>Na(+)</name>
        <dbReference type="ChEBI" id="CHEBI:29101"/>
    </ligand>
</feature>
<comment type="function">
    <text evidence="1">Protease subunit of a proteasome-like degradation complex believed to be a general protein degrading machinery.</text>
</comment>
<comment type="catalytic activity">
    <reaction evidence="1">
        <text>ATP-dependent cleavage of peptide bonds with broad specificity.</text>
        <dbReference type="EC" id="3.4.25.2"/>
    </reaction>
</comment>
<comment type="activity regulation">
    <text evidence="1">Allosterically activated by HslU binding.</text>
</comment>
<comment type="subunit">
    <text evidence="1">A double ring-shaped homohexamer of HslV is capped on each side by a ring-shaped HslU homohexamer. The assembly of the HslU/HslV complex is dependent on binding of ATP.</text>
</comment>
<comment type="subcellular location">
    <subcellularLocation>
        <location evidence="1">Cytoplasm</location>
    </subcellularLocation>
</comment>
<comment type="similarity">
    <text evidence="1">Belongs to the peptidase T1B family. HslV subfamily.</text>
</comment>
<dbReference type="EC" id="3.4.25.2" evidence="1"/>
<dbReference type="EMBL" id="CP001013">
    <property type="protein sequence ID" value="ACB36091.1"/>
    <property type="molecule type" value="Genomic_DNA"/>
</dbReference>
<dbReference type="RefSeq" id="WP_012348838.1">
    <property type="nucleotide sequence ID" value="NC_010524.1"/>
</dbReference>
<dbReference type="SMR" id="B1Y6R3"/>
<dbReference type="STRING" id="395495.Lcho_3837"/>
<dbReference type="MEROPS" id="T01.006"/>
<dbReference type="KEGG" id="lch:Lcho_3837"/>
<dbReference type="eggNOG" id="COG5405">
    <property type="taxonomic scope" value="Bacteria"/>
</dbReference>
<dbReference type="HOGENOM" id="CLU_093872_1_0_4"/>
<dbReference type="OrthoDB" id="9804884at2"/>
<dbReference type="Proteomes" id="UP000001693">
    <property type="component" value="Chromosome"/>
</dbReference>
<dbReference type="GO" id="GO:0009376">
    <property type="term" value="C:HslUV protease complex"/>
    <property type="evidence" value="ECO:0007669"/>
    <property type="project" value="UniProtKB-UniRule"/>
</dbReference>
<dbReference type="GO" id="GO:0005839">
    <property type="term" value="C:proteasome core complex"/>
    <property type="evidence" value="ECO:0007669"/>
    <property type="project" value="InterPro"/>
</dbReference>
<dbReference type="GO" id="GO:0046872">
    <property type="term" value="F:metal ion binding"/>
    <property type="evidence" value="ECO:0007669"/>
    <property type="project" value="UniProtKB-KW"/>
</dbReference>
<dbReference type="GO" id="GO:0004298">
    <property type="term" value="F:threonine-type endopeptidase activity"/>
    <property type="evidence" value="ECO:0007669"/>
    <property type="project" value="UniProtKB-KW"/>
</dbReference>
<dbReference type="GO" id="GO:0051603">
    <property type="term" value="P:proteolysis involved in protein catabolic process"/>
    <property type="evidence" value="ECO:0007669"/>
    <property type="project" value="InterPro"/>
</dbReference>
<dbReference type="CDD" id="cd01913">
    <property type="entry name" value="protease_HslV"/>
    <property type="match status" value="1"/>
</dbReference>
<dbReference type="FunFam" id="3.60.20.10:FF:000002">
    <property type="entry name" value="ATP-dependent protease subunit HslV"/>
    <property type="match status" value="1"/>
</dbReference>
<dbReference type="Gene3D" id="3.60.20.10">
    <property type="entry name" value="Glutamine Phosphoribosylpyrophosphate, subunit 1, domain 1"/>
    <property type="match status" value="1"/>
</dbReference>
<dbReference type="HAMAP" id="MF_00248">
    <property type="entry name" value="HslV"/>
    <property type="match status" value="1"/>
</dbReference>
<dbReference type="InterPro" id="IPR022281">
    <property type="entry name" value="ATP-dep_Prtase_HsIV_su"/>
</dbReference>
<dbReference type="InterPro" id="IPR029055">
    <property type="entry name" value="Ntn_hydrolases_N"/>
</dbReference>
<dbReference type="InterPro" id="IPR001353">
    <property type="entry name" value="Proteasome_sua/b"/>
</dbReference>
<dbReference type="InterPro" id="IPR023333">
    <property type="entry name" value="Proteasome_suB-type"/>
</dbReference>
<dbReference type="NCBIfam" id="TIGR03692">
    <property type="entry name" value="ATP_dep_HslV"/>
    <property type="match status" value="1"/>
</dbReference>
<dbReference type="NCBIfam" id="NF003964">
    <property type="entry name" value="PRK05456.1"/>
    <property type="match status" value="1"/>
</dbReference>
<dbReference type="PANTHER" id="PTHR32194:SF0">
    <property type="entry name" value="ATP-DEPENDENT PROTEASE SUBUNIT HSLV"/>
    <property type="match status" value="1"/>
</dbReference>
<dbReference type="PANTHER" id="PTHR32194">
    <property type="entry name" value="METALLOPROTEASE TLDD"/>
    <property type="match status" value="1"/>
</dbReference>
<dbReference type="Pfam" id="PF00227">
    <property type="entry name" value="Proteasome"/>
    <property type="match status" value="1"/>
</dbReference>
<dbReference type="PIRSF" id="PIRSF039093">
    <property type="entry name" value="HslV"/>
    <property type="match status" value="1"/>
</dbReference>
<dbReference type="SUPFAM" id="SSF56235">
    <property type="entry name" value="N-terminal nucleophile aminohydrolases (Ntn hydrolases)"/>
    <property type="match status" value="1"/>
</dbReference>
<dbReference type="PROSITE" id="PS51476">
    <property type="entry name" value="PROTEASOME_BETA_2"/>
    <property type="match status" value="1"/>
</dbReference>